<accession>Q72D36</accession>
<name>ARLY_NITV2</name>
<dbReference type="EC" id="4.3.2.1" evidence="1"/>
<dbReference type="EMBL" id="AE017285">
    <property type="protein sequence ID" value="AAS95574.1"/>
    <property type="molecule type" value="Genomic_DNA"/>
</dbReference>
<dbReference type="RefSeq" id="WP_010938393.1">
    <property type="nucleotide sequence ID" value="NC_002937.3"/>
</dbReference>
<dbReference type="RefSeq" id="YP_010315.1">
    <property type="nucleotide sequence ID" value="NC_002937.3"/>
</dbReference>
<dbReference type="SMR" id="Q72D36"/>
<dbReference type="IntAct" id="Q72D36">
    <property type="interactions" value="2"/>
</dbReference>
<dbReference type="STRING" id="882.DVU_1094"/>
<dbReference type="PaxDb" id="882-DVU_1094"/>
<dbReference type="EnsemblBacteria" id="AAS95574">
    <property type="protein sequence ID" value="AAS95574"/>
    <property type="gene ID" value="DVU_1094"/>
</dbReference>
<dbReference type="KEGG" id="dvu:DVU_1094"/>
<dbReference type="PATRIC" id="fig|882.5.peg.1032"/>
<dbReference type="eggNOG" id="COG0165">
    <property type="taxonomic scope" value="Bacteria"/>
</dbReference>
<dbReference type="HOGENOM" id="CLU_027272_2_3_7"/>
<dbReference type="OrthoDB" id="9769623at2"/>
<dbReference type="PhylomeDB" id="Q72D36"/>
<dbReference type="UniPathway" id="UPA00068">
    <property type="reaction ID" value="UER00114"/>
</dbReference>
<dbReference type="Proteomes" id="UP000002194">
    <property type="component" value="Chromosome"/>
</dbReference>
<dbReference type="GO" id="GO:0005829">
    <property type="term" value="C:cytosol"/>
    <property type="evidence" value="ECO:0007669"/>
    <property type="project" value="TreeGrafter"/>
</dbReference>
<dbReference type="GO" id="GO:0004056">
    <property type="term" value="F:argininosuccinate lyase activity"/>
    <property type="evidence" value="ECO:0007669"/>
    <property type="project" value="UniProtKB-UniRule"/>
</dbReference>
<dbReference type="GO" id="GO:0042450">
    <property type="term" value="P:arginine biosynthetic process via ornithine"/>
    <property type="evidence" value="ECO:0007669"/>
    <property type="project" value="InterPro"/>
</dbReference>
<dbReference type="GO" id="GO:0006526">
    <property type="term" value="P:L-arginine biosynthetic process"/>
    <property type="evidence" value="ECO:0007669"/>
    <property type="project" value="UniProtKB-UniRule"/>
</dbReference>
<dbReference type="CDD" id="cd01359">
    <property type="entry name" value="Argininosuccinate_lyase"/>
    <property type="match status" value="1"/>
</dbReference>
<dbReference type="FunFam" id="1.10.275.10:FF:000002">
    <property type="entry name" value="Argininosuccinate lyase"/>
    <property type="match status" value="1"/>
</dbReference>
<dbReference type="FunFam" id="1.10.40.30:FF:000001">
    <property type="entry name" value="Argininosuccinate lyase"/>
    <property type="match status" value="1"/>
</dbReference>
<dbReference type="FunFam" id="1.20.200.10:FF:000015">
    <property type="entry name" value="argininosuccinate lyase isoform X2"/>
    <property type="match status" value="1"/>
</dbReference>
<dbReference type="Gene3D" id="1.10.40.30">
    <property type="entry name" value="Fumarase/aspartase (C-terminal domain)"/>
    <property type="match status" value="1"/>
</dbReference>
<dbReference type="Gene3D" id="1.20.200.10">
    <property type="entry name" value="Fumarase/aspartase (Central domain)"/>
    <property type="match status" value="1"/>
</dbReference>
<dbReference type="Gene3D" id="1.10.275.10">
    <property type="entry name" value="Fumarase/aspartase (N-terminal domain)"/>
    <property type="match status" value="1"/>
</dbReference>
<dbReference type="HAMAP" id="MF_00006">
    <property type="entry name" value="Arg_succ_lyase"/>
    <property type="match status" value="1"/>
</dbReference>
<dbReference type="InterPro" id="IPR029419">
    <property type="entry name" value="Arg_succ_lyase_C"/>
</dbReference>
<dbReference type="InterPro" id="IPR009049">
    <property type="entry name" value="Argininosuccinate_lyase"/>
</dbReference>
<dbReference type="InterPro" id="IPR024083">
    <property type="entry name" value="Fumarase/histidase_N"/>
</dbReference>
<dbReference type="InterPro" id="IPR020557">
    <property type="entry name" value="Fumarate_lyase_CS"/>
</dbReference>
<dbReference type="InterPro" id="IPR000362">
    <property type="entry name" value="Fumarate_lyase_fam"/>
</dbReference>
<dbReference type="InterPro" id="IPR022761">
    <property type="entry name" value="Fumarate_lyase_N"/>
</dbReference>
<dbReference type="InterPro" id="IPR008948">
    <property type="entry name" value="L-Aspartase-like"/>
</dbReference>
<dbReference type="NCBIfam" id="TIGR00838">
    <property type="entry name" value="argH"/>
    <property type="match status" value="1"/>
</dbReference>
<dbReference type="PANTHER" id="PTHR43814">
    <property type="entry name" value="ARGININOSUCCINATE LYASE"/>
    <property type="match status" value="1"/>
</dbReference>
<dbReference type="PANTHER" id="PTHR43814:SF1">
    <property type="entry name" value="ARGININOSUCCINATE LYASE"/>
    <property type="match status" value="1"/>
</dbReference>
<dbReference type="Pfam" id="PF14698">
    <property type="entry name" value="ASL_C2"/>
    <property type="match status" value="1"/>
</dbReference>
<dbReference type="Pfam" id="PF00206">
    <property type="entry name" value="Lyase_1"/>
    <property type="match status" value="1"/>
</dbReference>
<dbReference type="PRINTS" id="PR00145">
    <property type="entry name" value="ARGSUCLYASE"/>
</dbReference>
<dbReference type="PRINTS" id="PR00149">
    <property type="entry name" value="FUMRATELYASE"/>
</dbReference>
<dbReference type="SUPFAM" id="SSF48557">
    <property type="entry name" value="L-aspartase-like"/>
    <property type="match status" value="1"/>
</dbReference>
<dbReference type="PROSITE" id="PS00163">
    <property type="entry name" value="FUMARATE_LYASES"/>
    <property type="match status" value="1"/>
</dbReference>
<gene>
    <name evidence="1" type="primary">argH</name>
    <name type="ordered locus">DVU_1094</name>
</gene>
<protein>
    <recommendedName>
        <fullName evidence="1">Argininosuccinate lyase</fullName>
        <shortName evidence="1">ASAL</shortName>
        <ecNumber evidence="1">4.3.2.1</ecNumber>
    </recommendedName>
    <alternativeName>
        <fullName evidence="1">Arginosuccinase</fullName>
    </alternativeName>
</protein>
<keyword id="KW-0028">Amino-acid biosynthesis</keyword>
<keyword id="KW-0055">Arginine biosynthesis</keyword>
<keyword id="KW-0963">Cytoplasm</keyword>
<keyword id="KW-0456">Lyase</keyword>
<keyword id="KW-1185">Reference proteome</keyword>
<comment type="catalytic activity">
    <reaction evidence="1">
        <text>2-(N(omega)-L-arginino)succinate = fumarate + L-arginine</text>
        <dbReference type="Rhea" id="RHEA:24020"/>
        <dbReference type="ChEBI" id="CHEBI:29806"/>
        <dbReference type="ChEBI" id="CHEBI:32682"/>
        <dbReference type="ChEBI" id="CHEBI:57472"/>
        <dbReference type="EC" id="4.3.2.1"/>
    </reaction>
</comment>
<comment type="pathway">
    <text evidence="1">Amino-acid biosynthesis; L-arginine biosynthesis; L-arginine from L-ornithine and carbamoyl phosphate: step 3/3.</text>
</comment>
<comment type="interaction">
    <interactant intactId="EBI-10067699">
        <id>Q72D36</id>
    </interactant>
    <interactant intactId="EBI-10067695">
        <id>Q72AA6</id>
        <label>thiE-1</label>
    </interactant>
    <organismsDiffer>false</organismsDiffer>
    <experiments>3</experiments>
</comment>
<comment type="subcellular location">
    <subcellularLocation>
        <location evidence="1">Cytoplasm</location>
    </subcellularLocation>
</comment>
<comment type="similarity">
    <text evidence="1">Belongs to the lyase 1 family. Argininosuccinate lyase subfamily.</text>
</comment>
<feature type="chain" id="PRO_0000137767" description="Argininosuccinate lyase">
    <location>
        <begin position="1"/>
        <end position="460"/>
    </location>
</feature>
<reference key="1">
    <citation type="journal article" date="2004" name="Nat. Biotechnol.">
        <title>The genome sequence of the anaerobic, sulfate-reducing bacterium Desulfovibrio vulgaris Hildenborough.</title>
        <authorList>
            <person name="Heidelberg J.F."/>
            <person name="Seshadri R."/>
            <person name="Haveman S.A."/>
            <person name="Hemme C.L."/>
            <person name="Paulsen I.T."/>
            <person name="Kolonay J.F."/>
            <person name="Eisen J.A."/>
            <person name="Ward N.L."/>
            <person name="Methe B.A."/>
            <person name="Brinkac L.M."/>
            <person name="Daugherty S.C."/>
            <person name="DeBoy R.T."/>
            <person name="Dodson R.J."/>
            <person name="Durkin A.S."/>
            <person name="Madupu R."/>
            <person name="Nelson W.C."/>
            <person name="Sullivan S.A."/>
            <person name="Fouts D.E."/>
            <person name="Haft D.H."/>
            <person name="Selengut J."/>
            <person name="Peterson J.D."/>
            <person name="Davidsen T.M."/>
            <person name="Zafar N."/>
            <person name="Zhou L."/>
            <person name="Radune D."/>
            <person name="Dimitrov G."/>
            <person name="Hance M."/>
            <person name="Tran K."/>
            <person name="Khouri H.M."/>
            <person name="Gill J."/>
            <person name="Utterback T.R."/>
            <person name="Feldblyum T.V."/>
            <person name="Wall J.D."/>
            <person name="Voordouw G."/>
            <person name="Fraser C.M."/>
        </authorList>
    </citation>
    <scope>NUCLEOTIDE SEQUENCE [LARGE SCALE GENOMIC DNA]</scope>
    <source>
        <strain>ATCC 29579 / DSM 644 / CCUG 34227 / NCIMB 8303 / VKM B-1760 / Hildenborough</strain>
    </source>
</reference>
<evidence type="ECO:0000255" key="1">
    <source>
        <dbReference type="HAMAP-Rule" id="MF_00006"/>
    </source>
</evidence>
<proteinExistence type="evidence at protein level"/>
<organism>
    <name type="scientific">Nitratidesulfovibrio vulgaris (strain ATCC 29579 / DSM 644 / CCUG 34227 / NCIMB 8303 / VKM B-1760 / Hildenborough)</name>
    <name type="common">Desulfovibrio vulgaris</name>
    <dbReference type="NCBI Taxonomy" id="882"/>
    <lineage>
        <taxon>Bacteria</taxon>
        <taxon>Pseudomonadati</taxon>
        <taxon>Thermodesulfobacteriota</taxon>
        <taxon>Desulfovibrionia</taxon>
        <taxon>Desulfovibrionales</taxon>
        <taxon>Desulfovibrionaceae</taxon>
        <taxon>Nitratidesulfovibrio</taxon>
    </lineage>
</organism>
<sequence>MAEKKMWGGRFKQGTATLVEEYTESVSYDRALYAQDIAGSMAHARMLARQGVLTAEEAAIIVDGLATVRSEIEAGSFVWRREFEDVHMNIENRLTELVGDVGKKLHTGRSRNDQVALDFRLFVSDRVRVWRELGRDLVGVIVDQARQHTATLLPGCTHMQPAQPVSLAQHLLAYAWMLRRDIDRLEDCDKRARVCPLGAAALAGTTYPLDPASVADELGMYGTFRNSMDAVSDRDFVLEALFDGSVIMAHLSRLCEEFILWANPAFGYIFLPDAYATGSSIMPQKKNPDVAELMRGKTGRVYGALTTMLTTVKGLPMTYNRDLQEDKEPFIDADRTVSASLEIMAGMLREVRFNTARMRTALRSGFLNATELADYLVGKGIPFREAHHLTGAAVALAEEKGVTLEELPLEDYRGICDRIDEDVYPILEPEAAVSRRETPGGTGPRSVAAQIAELDSWLGR</sequence>